<sequence>MKLSESTINKDYPFLSEEEDSKIISLICNYLSLGQFELARALILQSQEKQQLKNQQKQTQSDNNNNNNNNNNNNNNNNNNNNCDRISSILYHTIRNGPPSTWLTSESIPSSPHLSWLCSIEFYQLNKDGFISSISEKTLLLVEFAILIYTLLGEQQNNDSRNIQPIIQELREYHYVLLSQQRQQSNNKNNNNNNIDNLSEQQIYQMESILLRSKLGNSTISILKTILINNTEFGRYIIKQFTNPFISSLNNNNNNNGISNSLLYSRYPVTQQLESLVAEVITLLIDSSQYNEAYNLLSIIDISNNDNSNSNNNNNNNNNNINSDEVDSNSGDNNIISKLLERVANLNNSNFGNNVEELTLLKIPFSSKLSNLETDNNNNNNNNNNNNNNNNNNNNNNNNNNNNNNNNNNNNNGKSISRLKIYESLLSNPTLTPLKTYLKHEESILKENSSQQQPIDFPECFEILKNYFSLKPKQLDINSKNNNNDNNNNNNNNSSSSGSNSSSSRNKNNLKNNLKSFDRKDSEYQNAESIFWYWYYHFLRVNDRHYLEYALEKSIDLIKNKRFEEALIVVKPFEKLLPLLILLCWDHFENDITSRKHLTNLLDLSKGISKFNKNNNNNNNNNNNNNNNNNNNNNNNNNNNNNNNNNNNNEWSCRRMIAVPNSPNGHSLIIGESTFDLLDEKSKTLRGSFSPSSMSPSIPPSASNDSSLTSSPYLLSLGRSMTTNISNAILSQLFHHSFIYVVKDCLPFITSNDILKFIEKDPDFPINYQQQQEQQEQQQQSNDSENLLSQIALDKLNDMNLVRGYYLIKNILKFFQYRATSTDAIVDKVEFDSVLDDVFDLFKGISNANISIGLIESLYLSLFLSNQDLKSNNNNTNDLGEISSSSSAFRLNNDFNYNNNSNNNDKPNNNEFYQYYKKVISNSSEENNLSYYLVNNNSHNNNNNNNNNNNNNNNNNNNNNNNNNNNNNNNNNNNNNNNNNSNNEINEQIIEIIDNEFSYQKLSKSQHKQYYITCVMLESLINKLITLIDFIVDSSLQQQQKQEIKKERIQILLLNLENLKHRVDLSKWILNLDDNNYNHIPFMSLVLMPIKSLILMAMRTNYPNFQIIIKYFDIPKDIENQAYQFKSIPDLLDVLENNGGGDNDDDGADINLNQLTTSFNGINNDNIFQILSDIVIGSNCNNSLIKKILKINNNNNNDNDNNNKSKSYLNWISILHKEYIDQISTTNSNSLYDILINPQSIPDKDYQNISKMKQYINNKKIIIKSLNRLIKCYDNTINNKNNNNNIDNNNNNNNNNNNNNNNNNNNNNNNNNNNNNNNNNNIEDDVKIIIENDNNISNNQILSTLFKYILSVNQIYSNCSDYSSIFRNINQSPKSILQDIVFNEKDYKKAEQLSNLLQVDLSDLIISSISHTTPKNPPSSLFKSSTPESSVLNSPIFYINNQQQQQQQLQLQQQQQQQQLQQQQQQQQQLQLQQQQQQQQQQQQQQQQQQQQQQQQQQQQQQQQQLTNDNIQKNYLTMDLVNYFDKSSKLLSSLVCMLKSPDHKDVEPFIQFSIENSKKLPSNSFSNWINEILKAHTFYHKYFNQQQNNNYNNNNYNNNYNNNNNNNNNNNNNNNNNNNIDNQQTINETFDYKLIQNSESIHQQQNFFFKIIQFFVNNNNLMDALKIADEYLEEGAPDWLLKLLVFKDRSQGYKYIRRMRDKPKALNLVLELYNNWDIATCIDMIVICKSFLGLPDQINQQQQPTTTTTTTIQDQQDENIKNELNHLHKAFLLYQSILNNANNGNVYRNWQEIKEICQNDPATMVRNLLDSKHYDLARKIRDHFSVSGIKKEIEERYLYYLLVEKDDASLALQTLSELGEESISILDSLLPVINEISVKLFLVQFLLSNMRSKLSKEKLEELTKQEIGYQVLLVLPTDLQVEYSQFINHPLLIIEMLIMNEKIPLVAKLLLDIKELKDVDDLLTYYARKALSFSRYLAKNDLMMLDDYLQKEFNDQDDYVSNNNYNKNDQINSKEKDKDKKRKSFLSNLPIITNKSSQTIKQSPSFEVEDFRHEISNRSSTPPPPPPTETPSLNIVHSTSPNSSVSLLKDKNIQQKWLLTGNDTVQDEKIRHSHFFIRSPSISLAKSLFDLCESKKKVYNTCIELYSNLSMLLSSNYSDDNLLIINLIQQLLMYTKLQLLRDPKSGGPTLVAVCDTYLGKVELFQSLVVSKCSGSMSLVDLSDPQKARQLRDRLIQEDRLRLAIDVATKCNIPADSAWVSWGISLIQTGSYSEAREKFKYCLTPTGPDRRVMSPSNSLSIDTIDSGVILNQIIQLLESPPSPNHSNFRSLYNYLLSTQGGGSSSNLKSTPKIDDSMFYNLLQPQLLNNSSNNSNNNNNTNNNNNNNNAITNLFSNAFSDKKSLTNNNSSSINNTTIINNIEMDKNRLDEAIYYLKKYGNGRMLVNFLIKHNLYELACKTILSDSLSFNIFYDEIVLKAIANSSLQDLFNTIKSIDPKLLAFQDHLLASCKNMNERKQYQLLFEFQLYMGDNVRAGLTCVKMFLTNPEGTANSRVHHLEQALYYFNIGLTNYVKGCVLSQPEINNYIQNCTTQLEISKFFYKSSSVFPTTSPVHKLSIFGTIKQKTELVEQLTINGNFDLGFKIAQESKLTLPPIYVNALTTMARKKMSSKIEDYLNQLRGCINPEDWELIAMPVFETQCLELKEFKSAEKFIPKLYTVYNSVRISILCGKLKTAYLTAVQHKDRSLIKMVMDEAQKTNQPVIFKWCQEILNQ</sequence>
<protein>
    <recommendedName>
        <fullName>Protein DDB_G0276689</fullName>
    </recommendedName>
</protein>
<accession>Q551A3</accession>
<accession>Q551A2</accession>
<reference key="1">
    <citation type="journal article" date="2002" name="Nature">
        <title>Sequence and analysis of chromosome 2 of Dictyostelium discoideum.</title>
        <authorList>
            <person name="Gloeckner G."/>
            <person name="Eichinger L."/>
            <person name="Szafranski K."/>
            <person name="Pachebat J.A."/>
            <person name="Bankier A.T."/>
            <person name="Dear P.H."/>
            <person name="Lehmann R."/>
            <person name="Baumgart C."/>
            <person name="Parra G."/>
            <person name="Abril J.F."/>
            <person name="Guigo R."/>
            <person name="Kumpf K."/>
            <person name="Tunggal B."/>
            <person name="Cox E.C."/>
            <person name="Quail M.A."/>
            <person name="Platzer M."/>
            <person name="Rosenthal A."/>
            <person name="Noegel A.A."/>
        </authorList>
    </citation>
    <scope>NUCLEOTIDE SEQUENCE [LARGE SCALE GENOMIC DNA]</scope>
    <source>
        <strain>AX4</strain>
    </source>
</reference>
<reference key="2">
    <citation type="journal article" date="2005" name="Nature">
        <title>The genome of the social amoeba Dictyostelium discoideum.</title>
        <authorList>
            <person name="Eichinger L."/>
            <person name="Pachebat J.A."/>
            <person name="Gloeckner G."/>
            <person name="Rajandream M.A."/>
            <person name="Sucgang R."/>
            <person name="Berriman M."/>
            <person name="Song J."/>
            <person name="Olsen R."/>
            <person name="Szafranski K."/>
            <person name="Xu Q."/>
            <person name="Tunggal B."/>
            <person name="Kummerfeld S."/>
            <person name="Madera M."/>
            <person name="Konfortov B.A."/>
            <person name="Rivero F."/>
            <person name="Bankier A.T."/>
            <person name="Lehmann R."/>
            <person name="Hamlin N."/>
            <person name="Davies R."/>
            <person name="Gaudet P."/>
            <person name="Fey P."/>
            <person name="Pilcher K."/>
            <person name="Chen G."/>
            <person name="Saunders D."/>
            <person name="Sodergren E.J."/>
            <person name="Davis P."/>
            <person name="Kerhornou A."/>
            <person name="Nie X."/>
            <person name="Hall N."/>
            <person name="Anjard C."/>
            <person name="Hemphill L."/>
            <person name="Bason N."/>
            <person name="Farbrother P."/>
            <person name="Desany B."/>
            <person name="Just E."/>
            <person name="Morio T."/>
            <person name="Rost R."/>
            <person name="Churcher C.M."/>
            <person name="Cooper J."/>
            <person name="Haydock S."/>
            <person name="van Driessche N."/>
            <person name="Cronin A."/>
            <person name="Goodhead I."/>
            <person name="Muzny D.M."/>
            <person name="Mourier T."/>
            <person name="Pain A."/>
            <person name="Lu M."/>
            <person name="Harper D."/>
            <person name="Lindsay R."/>
            <person name="Hauser H."/>
            <person name="James K.D."/>
            <person name="Quiles M."/>
            <person name="Madan Babu M."/>
            <person name="Saito T."/>
            <person name="Buchrieser C."/>
            <person name="Wardroper A."/>
            <person name="Felder M."/>
            <person name="Thangavelu M."/>
            <person name="Johnson D."/>
            <person name="Knights A."/>
            <person name="Loulseged H."/>
            <person name="Mungall K.L."/>
            <person name="Oliver K."/>
            <person name="Price C."/>
            <person name="Quail M.A."/>
            <person name="Urushihara H."/>
            <person name="Hernandez J."/>
            <person name="Rabbinowitsch E."/>
            <person name="Steffen D."/>
            <person name="Sanders M."/>
            <person name="Ma J."/>
            <person name="Kohara Y."/>
            <person name="Sharp S."/>
            <person name="Simmonds M.N."/>
            <person name="Spiegler S."/>
            <person name="Tivey A."/>
            <person name="Sugano S."/>
            <person name="White B."/>
            <person name="Walker D."/>
            <person name="Woodward J.R."/>
            <person name="Winckler T."/>
            <person name="Tanaka Y."/>
            <person name="Shaulsky G."/>
            <person name="Schleicher M."/>
            <person name="Weinstock G.M."/>
            <person name="Rosenthal A."/>
            <person name="Cox E.C."/>
            <person name="Chisholm R.L."/>
            <person name="Gibbs R.A."/>
            <person name="Loomis W.F."/>
            <person name="Platzer M."/>
            <person name="Kay R.R."/>
            <person name="Williams J.G."/>
            <person name="Dear P.H."/>
            <person name="Noegel A.A."/>
            <person name="Barrell B.G."/>
            <person name="Kuspa A."/>
        </authorList>
    </citation>
    <scope>NUCLEOTIDE SEQUENCE [LARGE SCALE GENOMIC DNA]</scope>
    <source>
        <strain>AX4</strain>
    </source>
</reference>
<reference key="3">
    <citation type="journal article" date="2006" name="J. Cell Sci.">
        <title>Functional genomics in Dictyostelium: midA, a new conserved protein, is required for mitochondrial function and development.</title>
        <authorList>
            <person name="Torija P."/>
            <person name="Vicente J.J."/>
            <person name="Rodrigues T.B."/>
            <person name="Robles A."/>
            <person name="Cerdan S."/>
            <person name="Sastre L."/>
            <person name="Calvo R.M."/>
            <person name="Escalante R."/>
        </authorList>
    </citation>
    <scope>DISRUPTION PHENOTYPE</scope>
</reference>
<proteinExistence type="predicted"/>
<feature type="chain" id="PRO_0000390619" description="Protein DDB_G0276689">
    <location>
        <begin position="1"/>
        <end position="2772"/>
    </location>
</feature>
<feature type="repeat" description="LRR 1">
    <location>
        <begin position="1065"/>
        <end position="1089"/>
    </location>
</feature>
<feature type="repeat" description="LRR 2">
    <location>
        <begin position="1393"/>
        <end position="1416"/>
    </location>
</feature>
<feature type="repeat" description="LRR 3">
    <location>
        <begin position="1543"/>
        <end position="1567"/>
    </location>
</feature>
<feature type="repeat" description="LRR 4">
    <location>
        <begin position="1899"/>
        <end position="1922"/>
    </location>
</feature>
<feature type="repeat" description="LRR 5">
    <location>
        <begin position="2414"/>
        <end position="2439"/>
    </location>
</feature>
<feature type="region of interest" description="Disordered" evidence="1">
    <location>
        <begin position="50"/>
        <end position="82"/>
    </location>
</feature>
<feature type="region of interest" description="Disordered" evidence="1">
    <location>
        <begin position="371"/>
        <end position="415"/>
    </location>
</feature>
<feature type="region of interest" description="Disordered" evidence="1">
    <location>
        <begin position="475"/>
        <end position="514"/>
    </location>
</feature>
<feature type="region of interest" description="Disordered" evidence="1">
    <location>
        <begin position="612"/>
        <end position="650"/>
    </location>
</feature>
<feature type="region of interest" description="Disordered" evidence="1">
    <location>
        <begin position="685"/>
        <end position="708"/>
    </location>
</feature>
<feature type="region of interest" description="Disordered" evidence="1">
    <location>
        <begin position="933"/>
        <end position="982"/>
    </location>
</feature>
<feature type="region of interest" description="Disordered" evidence="1">
    <location>
        <begin position="1282"/>
        <end position="1319"/>
    </location>
</feature>
<feature type="region of interest" description="Disordered" evidence="1">
    <location>
        <begin position="1587"/>
        <end position="1622"/>
    </location>
</feature>
<feature type="region of interest" description="Disordered" evidence="1">
    <location>
        <begin position="1999"/>
        <end position="2021"/>
    </location>
</feature>
<feature type="region of interest" description="Disordered" evidence="1">
    <location>
        <begin position="2054"/>
        <end position="2083"/>
    </location>
</feature>
<feature type="region of interest" description="Disordered" evidence="1">
    <location>
        <begin position="2367"/>
        <end position="2386"/>
    </location>
</feature>
<feature type="compositionally biased region" description="Low complexity" evidence="1">
    <location>
        <begin position="376"/>
        <end position="412"/>
    </location>
</feature>
<feature type="compositionally biased region" description="Low complexity" evidence="1">
    <location>
        <begin position="478"/>
        <end position="514"/>
    </location>
</feature>
<feature type="compositionally biased region" description="Low complexity" evidence="1">
    <location>
        <begin position="614"/>
        <end position="649"/>
    </location>
</feature>
<feature type="compositionally biased region" description="Low complexity" evidence="1">
    <location>
        <begin position="688"/>
        <end position="708"/>
    </location>
</feature>
<feature type="compositionally biased region" description="Low complexity" evidence="1">
    <location>
        <begin position="1587"/>
        <end position="1619"/>
    </location>
</feature>
<feature type="compositionally biased region" description="Polar residues" evidence="1">
    <location>
        <begin position="1999"/>
        <end position="2011"/>
    </location>
</feature>
<feature type="compositionally biased region" description="Polar residues" evidence="1">
    <location>
        <begin position="2073"/>
        <end position="2083"/>
    </location>
</feature>
<keyword id="KW-0175">Coiled coil</keyword>
<keyword id="KW-0433">Leucine-rich repeat</keyword>
<keyword id="KW-1185">Reference proteome</keyword>
<keyword id="KW-0677">Repeat</keyword>
<evidence type="ECO:0000256" key="1">
    <source>
        <dbReference type="SAM" id="MobiDB-lite"/>
    </source>
</evidence>
<evidence type="ECO:0000269" key="2">
    <source>
    </source>
</evidence>
<evidence type="ECO:0000305" key="3"/>
<name>Y6689_DICDI</name>
<gene>
    <name type="ORF">DDB_G0276689</name>
</gene>
<comment type="disruption phenotype">
    <text evidence="2">No visible phenotype.</text>
</comment>
<comment type="sequence caution" evidence="3">
    <conflict type="erroneous gene model prediction">
        <sequence resource="EMBL-CDS" id="EAL69102"/>
    </conflict>
</comment>
<comment type="sequence caution" evidence="3">
    <conflict type="erroneous gene model prediction">
        <sequence resource="EMBL-CDS" id="EAL69103"/>
    </conflict>
</comment>
<organism>
    <name type="scientific">Dictyostelium discoideum</name>
    <name type="common">Social amoeba</name>
    <dbReference type="NCBI Taxonomy" id="44689"/>
    <lineage>
        <taxon>Eukaryota</taxon>
        <taxon>Amoebozoa</taxon>
        <taxon>Evosea</taxon>
        <taxon>Eumycetozoa</taxon>
        <taxon>Dictyostelia</taxon>
        <taxon>Dictyosteliales</taxon>
        <taxon>Dictyosteliaceae</taxon>
        <taxon>Dictyostelium</taxon>
    </lineage>
</organism>
<dbReference type="EMBL" id="AAFI02000018">
    <property type="protein sequence ID" value="EAL69102.1"/>
    <property type="status" value="ALT_SEQ"/>
    <property type="molecule type" value="Genomic_DNA"/>
</dbReference>
<dbReference type="EMBL" id="AAFI02000018">
    <property type="protein sequence ID" value="EAL69103.1"/>
    <property type="status" value="ALT_SEQ"/>
    <property type="molecule type" value="Genomic_DNA"/>
</dbReference>
<dbReference type="RefSeq" id="XP_643035.1">
    <property type="nucleotide sequence ID" value="XM_637943.1"/>
</dbReference>
<dbReference type="RefSeq" id="XP_643036.1">
    <property type="nucleotide sequence ID" value="XM_637944.1"/>
</dbReference>
<dbReference type="SMR" id="Q551A3"/>
<dbReference type="STRING" id="44689.Q551A3"/>
<dbReference type="PaxDb" id="44689-DDB0232152"/>
<dbReference type="EnsemblProtists" id="EAL69102">
    <property type="protein sequence ID" value="EAL69102"/>
    <property type="gene ID" value="DDB_G0276689"/>
</dbReference>
<dbReference type="EnsemblProtists" id="EAL69103">
    <property type="protein sequence ID" value="EAL69103"/>
    <property type="gene ID" value="DDB_G0276691"/>
</dbReference>
<dbReference type="GeneID" id="8620640"/>
<dbReference type="KEGG" id="ddi:DDB_G0276689"/>
<dbReference type="KEGG" id="ddi:DDB_G0276691"/>
<dbReference type="dictyBase" id="DDB_G0276689"/>
<dbReference type="VEuPathDB" id="AmoebaDB:DDB_G0276689"/>
<dbReference type="VEuPathDB" id="AmoebaDB:DDB_G0276691"/>
<dbReference type="eggNOG" id="KOG1811">
    <property type="taxonomic scope" value="Eukaryota"/>
</dbReference>
<dbReference type="InParanoid" id="Q551A3"/>
<dbReference type="PRO" id="PR:Q551A3"/>
<dbReference type="Proteomes" id="UP000002195">
    <property type="component" value="Chromosome 2"/>
</dbReference>
<dbReference type="GO" id="GO:0005813">
    <property type="term" value="C:centrosome"/>
    <property type="evidence" value="ECO:0000318"/>
    <property type="project" value="GO_Central"/>
</dbReference>
<dbReference type="GO" id="GO:0030496">
    <property type="term" value="C:midbody"/>
    <property type="evidence" value="ECO:0000318"/>
    <property type="project" value="GO_Central"/>
</dbReference>
<dbReference type="GO" id="GO:0032266">
    <property type="term" value="F:phosphatidylinositol-3-phosphate binding"/>
    <property type="evidence" value="ECO:0000318"/>
    <property type="project" value="GO_Central"/>
</dbReference>
<dbReference type="GO" id="GO:0000724">
    <property type="term" value="P:double-strand break repair via homologous recombination"/>
    <property type="evidence" value="ECO:0007669"/>
    <property type="project" value="InterPro"/>
</dbReference>
<dbReference type="GO" id="GO:0000281">
    <property type="term" value="P:mitotic cytokinesis"/>
    <property type="evidence" value="ECO:0007669"/>
    <property type="project" value="InterPro"/>
</dbReference>
<dbReference type="GO" id="GO:0032465">
    <property type="term" value="P:regulation of cytokinesis"/>
    <property type="evidence" value="ECO:0000318"/>
    <property type="project" value="GO_Central"/>
</dbReference>
<dbReference type="InterPro" id="IPR028730">
    <property type="entry name" value="ZFYVE26"/>
</dbReference>
<dbReference type="PANTHER" id="PTHR46591">
    <property type="entry name" value="ZINC FINGER FYVE DOMAIN-CONTAINING PROTEIN 26"/>
    <property type="match status" value="1"/>
</dbReference>
<dbReference type="PANTHER" id="PTHR46591:SF1">
    <property type="entry name" value="ZINC FINGER FYVE DOMAIN-CONTAINING PROTEIN 26"/>
    <property type="match status" value="1"/>
</dbReference>